<gene>
    <name evidence="1" type="primary">rplO</name>
    <name type="ordered locus">Daro_0338</name>
</gene>
<feature type="chain" id="PRO_0000104713" description="Large ribosomal subunit protein uL15">
    <location>
        <begin position="1"/>
        <end position="144"/>
    </location>
</feature>
<feature type="region of interest" description="Disordered" evidence="2">
    <location>
        <begin position="1"/>
        <end position="54"/>
    </location>
</feature>
<feature type="compositionally biased region" description="Gly residues" evidence="2">
    <location>
        <begin position="21"/>
        <end position="31"/>
    </location>
</feature>
<reference key="1">
    <citation type="journal article" date="2009" name="BMC Genomics">
        <title>Metabolic analysis of the soil microbe Dechloromonas aromatica str. RCB: indications of a surprisingly complex life-style and cryptic anaerobic pathways for aromatic degradation.</title>
        <authorList>
            <person name="Salinero K.K."/>
            <person name="Keller K."/>
            <person name="Feil W.S."/>
            <person name="Feil H."/>
            <person name="Trong S."/>
            <person name="Di Bartolo G."/>
            <person name="Lapidus A."/>
        </authorList>
    </citation>
    <scope>NUCLEOTIDE SEQUENCE [LARGE SCALE GENOMIC DNA]</scope>
    <source>
        <strain>RCB</strain>
    </source>
</reference>
<dbReference type="EMBL" id="CP000089">
    <property type="protein sequence ID" value="AAZ45097.1"/>
    <property type="molecule type" value="Genomic_DNA"/>
</dbReference>
<dbReference type="SMR" id="Q47J84"/>
<dbReference type="STRING" id="159087.Daro_0338"/>
<dbReference type="KEGG" id="dar:Daro_0338"/>
<dbReference type="eggNOG" id="COG0200">
    <property type="taxonomic scope" value="Bacteria"/>
</dbReference>
<dbReference type="HOGENOM" id="CLU_055188_4_2_4"/>
<dbReference type="OrthoDB" id="9810293at2"/>
<dbReference type="GO" id="GO:0022625">
    <property type="term" value="C:cytosolic large ribosomal subunit"/>
    <property type="evidence" value="ECO:0007669"/>
    <property type="project" value="TreeGrafter"/>
</dbReference>
<dbReference type="GO" id="GO:0019843">
    <property type="term" value="F:rRNA binding"/>
    <property type="evidence" value="ECO:0007669"/>
    <property type="project" value="UniProtKB-UniRule"/>
</dbReference>
<dbReference type="GO" id="GO:0003735">
    <property type="term" value="F:structural constituent of ribosome"/>
    <property type="evidence" value="ECO:0007669"/>
    <property type="project" value="InterPro"/>
</dbReference>
<dbReference type="GO" id="GO:0006412">
    <property type="term" value="P:translation"/>
    <property type="evidence" value="ECO:0007669"/>
    <property type="project" value="UniProtKB-UniRule"/>
</dbReference>
<dbReference type="Gene3D" id="3.100.10.10">
    <property type="match status" value="1"/>
</dbReference>
<dbReference type="HAMAP" id="MF_01341">
    <property type="entry name" value="Ribosomal_uL15"/>
    <property type="match status" value="1"/>
</dbReference>
<dbReference type="InterPro" id="IPR030878">
    <property type="entry name" value="Ribosomal_uL15"/>
</dbReference>
<dbReference type="InterPro" id="IPR021131">
    <property type="entry name" value="Ribosomal_uL15/eL18"/>
</dbReference>
<dbReference type="InterPro" id="IPR036227">
    <property type="entry name" value="Ribosomal_uL15/eL18_sf"/>
</dbReference>
<dbReference type="InterPro" id="IPR005749">
    <property type="entry name" value="Ribosomal_uL15_bac-type"/>
</dbReference>
<dbReference type="InterPro" id="IPR001196">
    <property type="entry name" value="Ribosomal_uL15_CS"/>
</dbReference>
<dbReference type="NCBIfam" id="TIGR01071">
    <property type="entry name" value="rplO_bact"/>
    <property type="match status" value="1"/>
</dbReference>
<dbReference type="PANTHER" id="PTHR12934">
    <property type="entry name" value="50S RIBOSOMAL PROTEIN L15"/>
    <property type="match status" value="1"/>
</dbReference>
<dbReference type="PANTHER" id="PTHR12934:SF11">
    <property type="entry name" value="LARGE RIBOSOMAL SUBUNIT PROTEIN UL15M"/>
    <property type="match status" value="1"/>
</dbReference>
<dbReference type="Pfam" id="PF00828">
    <property type="entry name" value="Ribosomal_L27A"/>
    <property type="match status" value="1"/>
</dbReference>
<dbReference type="SUPFAM" id="SSF52080">
    <property type="entry name" value="Ribosomal proteins L15p and L18e"/>
    <property type="match status" value="1"/>
</dbReference>
<dbReference type="PROSITE" id="PS00475">
    <property type="entry name" value="RIBOSOMAL_L15"/>
    <property type="match status" value="1"/>
</dbReference>
<evidence type="ECO:0000255" key="1">
    <source>
        <dbReference type="HAMAP-Rule" id="MF_01341"/>
    </source>
</evidence>
<evidence type="ECO:0000256" key="2">
    <source>
        <dbReference type="SAM" id="MobiDB-lite"/>
    </source>
</evidence>
<evidence type="ECO:0000305" key="3"/>
<proteinExistence type="inferred from homology"/>
<organism>
    <name type="scientific">Dechloromonas aromatica (strain RCB)</name>
    <dbReference type="NCBI Taxonomy" id="159087"/>
    <lineage>
        <taxon>Bacteria</taxon>
        <taxon>Pseudomonadati</taxon>
        <taxon>Pseudomonadota</taxon>
        <taxon>Betaproteobacteria</taxon>
        <taxon>Rhodocyclales</taxon>
        <taxon>Azonexaceae</taxon>
        <taxon>Dechloromonas</taxon>
    </lineage>
</organism>
<sequence length="144" mass="15042">MRLNTIKPGEGSKKTAKRVGRGIGSGLGKTCGRGHKGQKSRSGGFHKVGFEGGQMPLQRRLPKRGFNSLTRARNYEVRLTDLDRLPVDEIDLLALQVAGIVPGDALSAKVILSGAISRKVVLKGVGATKGAKAAIEAVGGSIAE</sequence>
<protein>
    <recommendedName>
        <fullName evidence="1">Large ribosomal subunit protein uL15</fullName>
    </recommendedName>
    <alternativeName>
        <fullName evidence="3">50S ribosomal protein L15</fullName>
    </alternativeName>
</protein>
<comment type="function">
    <text evidence="1">Binds to the 23S rRNA.</text>
</comment>
<comment type="subunit">
    <text evidence="1">Part of the 50S ribosomal subunit.</text>
</comment>
<comment type="similarity">
    <text evidence="1">Belongs to the universal ribosomal protein uL15 family.</text>
</comment>
<accession>Q47J84</accession>
<keyword id="KW-0687">Ribonucleoprotein</keyword>
<keyword id="KW-0689">Ribosomal protein</keyword>
<keyword id="KW-0694">RNA-binding</keyword>
<keyword id="KW-0699">rRNA-binding</keyword>
<name>RL15_DECAR</name>